<organism>
    <name type="scientific">Thermus thermophilus (strain ATCC 27634 / DSM 579 / HB8)</name>
    <dbReference type="NCBI Taxonomy" id="300852"/>
    <lineage>
        <taxon>Bacteria</taxon>
        <taxon>Thermotogati</taxon>
        <taxon>Deinococcota</taxon>
        <taxon>Deinococci</taxon>
        <taxon>Thermales</taxon>
        <taxon>Thermaceae</taxon>
        <taxon>Thermus</taxon>
    </lineage>
</organism>
<dbReference type="EC" id="2.8.4.3" evidence="1"/>
<dbReference type="EMBL" id="AP008226">
    <property type="protein sequence ID" value="BAD71131.1"/>
    <property type="molecule type" value="Genomic_DNA"/>
</dbReference>
<dbReference type="RefSeq" id="YP_144574.1">
    <property type="nucleotide sequence ID" value="NC_006461.1"/>
</dbReference>
<dbReference type="SMR" id="Q5SME9"/>
<dbReference type="EnsemblBacteria" id="BAD71131">
    <property type="protein sequence ID" value="BAD71131"/>
    <property type="gene ID" value="BAD71131"/>
</dbReference>
<dbReference type="KEGG" id="ttj:TTHA1308"/>
<dbReference type="PATRIC" id="fig|300852.9.peg.1286"/>
<dbReference type="eggNOG" id="COG0621">
    <property type="taxonomic scope" value="Bacteria"/>
</dbReference>
<dbReference type="HOGENOM" id="CLU_018697_2_0_0"/>
<dbReference type="PhylomeDB" id="Q5SME9"/>
<dbReference type="Proteomes" id="UP000000532">
    <property type="component" value="Chromosome"/>
</dbReference>
<dbReference type="GO" id="GO:0005829">
    <property type="term" value="C:cytosol"/>
    <property type="evidence" value="ECO:0007669"/>
    <property type="project" value="TreeGrafter"/>
</dbReference>
<dbReference type="GO" id="GO:0051539">
    <property type="term" value="F:4 iron, 4 sulfur cluster binding"/>
    <property type="evidence" value="ECO:0007669"/>
    <property type="project" value="UniProtKB-UniRule"/>
</dbReference>
<dbReference type="GO" id="GO:0046872">
    <property type="term" value="F:metal ion binding"/>
    <property type="evidence" value="ECO:0007669"/>
    <property type="project" value="UniProtKB-KW"/>
</dbReference>
<dbReference type="GO" id="GO:0035597">
    <property type="term" value="F:N6-isopentenyladenosine methylthiotransferase activity"/>
    <property type="evidence" value="ECO:0007669"/>
    <property type="project" value="TreeGrafter"/>
</dbReference>
<dbReference type="CDD" id="cd01335">
    <property type="entry name" value="Radical_SAM"/>
    <property type="match status" value="1"/>
</dbReference>
<dbReference type="FunFam" id="3.40.50.12160:FF:000003">
    <property type="entry name" value="CDK5 regulatory subunit-associated protein 1"/>
    <property type="match status" value="1"/>
</dbReference>
<dbReference type="FunFam" id="3.80.30.20:FF:000001">
    <property type="entry name" value="tRNA-2-methylthio-N(6)-dimethylallyladenosine synthase 2"/>
    <property type="match status" value="1"/>
</dbReference>
<dbReference type="Gene3D" id="3.40.50.12160">
    <property type="entry name" value="Methylthiotransferase, N-terminal domain"/>
    <property type="match status" value="1"/>
</dbReference>
<dbReference type="Gene3D" id="3.80.30.20">
    <property type="entry name" value="tm_1862 like domain"/>
    <property type="match status" value="1"/>
</dbReference>
<dbReference type="HAMAP" id="MF_01864">
    <property type="entry name" value="tRNA_metthiotr_MiaB"/>
    <property type="match status" value="1"/>
</dbReference>
<dbReference type="InterPro" id="IPR006638">
    <property type="entry name" value="Elp3/MiaA/NifB-like_rSAM"/>
</dbReference>
<dbReference type="InterPro" id="IPR005839">
    <property type="entry name" value="Methylthiotransferase"/>
</dbReference>
<dbReference type="InterPro" id="IPR020612">
    <property type="entry name" value="Methylthiotransferase_CS"/>
</dbReference>
<dbReference type="InterPro" id="IPR013848">
    <property type="entry name" value="Methylthiotransferase_N"/>
</dbReference>
<dbReference type="InterPro" id="IPR038135">
    <property type="entry name" value="Methylthiotransferase_N_sf"/>
</dbReference>
<dbReference type="InterPro" id="IPR006463">
    <property type="entry name" value="MiaB_methiolase"/>
</dbReference>
<dbReference type="InterPro" id="IPR007197">
    <property type="entry name" value="rSAM"/>
</dbReference>
<dbReference type="InterPro" id="IPR023404">
    <property type="entry name" value="rSAM_horseshoe"/>
</dbReference>
<dbReference type="InterPro" id="IPR002792">
    <property type="entry name" value="TRAM_dom"/>
</dbReference>
<dbReference type="NCBIfam" id="TIGR01574">
    <property type="entry name" value="miaB-methiolase"/>
    <property type="match status" value="1"/>
</dbReference>
<dbReference type="NCBIfam" id="TIGR00089">
    <property type="entry name" value="MiaB/RimO family radical SAM methylthiotransferase"/>
    <property type="match status" value="1"/>
</dbReference>
<dbReference type="PANTHER" id="PTHR43020">
    <property type="entry name" value="CDK5 REGULATORY SUBUNIT-ASSOCIATED PROTEIN 1"/>
    <property type="match status" value="1"/>
</dbReference>
<dbReference type="PANTHER" id="PTHR43020:SF2">
    <property type="entry name" value="MITOCHONDRIAL TRNA METHYLTHIOTRANSFERASE CDK5RAP1"/>
    <property type="match status" value="1"/>
</dbReference>
<dbReference type="Pfam" id="PF04055">
    <property type="entry name" value="Radical_SAM"/>
    <property type="match status" value="1"/>
</dbReference>
<dbReference type="Pfam" id="PF01938">
    <property type="entry name" value="TRAM"/>
    <property type="match status" value="1"/>
</dbReference>
<dbReference type="Pfam" id="PF00919">
    <property type="entry name" value="UPF0004"/>
    <property type="match status" value="1"/>
</dbReference>
<dbReference type="SFLD" id="SFLDF00273">
    <property type="entry name" value="(dimethylallyl)adenosine_tRNA"/>
    <property type="match status" value="1"/>
</dbReference>
<dbReference type="SFLD" id="SFLDG01082">
    <property type="entry name" value="B12-binding_domain_containing"/>
    <property type="match status" value="1"/>
</dbReference>
<dbReference type="SFLD" id="SFLDS00029">
    <property type="entry name" value="Radical_SAM"/>
    <property type="match status" value="1"/>
</dbReference>
<dbReference type="SMART" id="SM00729">
    <property type="entry name" value="Elp3"/>
    <property type="match status" value="1"/>
</dbReference>
<dbReference type="SUPFAM" id="SSF102114">
    <property type="entry name" value="Radical SAM enzymes"/>
    <property type="match status" value="1"/>
</dbReference>
<dbReference type="PROSITE" id="PS51449">
    <property type="entry name" value="MTTASE_N"/>
    <property type="match status" value="1"/>
</dbReference>
<dbReference type="PROSITE" id="PS01278">
    <property type="entry name" value="MTTASE_RADICAL"/>
    <property type="match status" value="1"/>
</dbReference>
<dbReference type="PROSITE" id="PS51918">
    <property type="entry name" value="RADICAL_SAM"/>
    <property type="match status" value="1"/>
</dbReference>
<dbReference type="PROSITE" id="PS50926">
    <property type="entry name" value="TRAM"/>
    <property type="match status" value="1"/>
</dbReference>
<reference key="1">
    <citation type="submission" date="2004-11" db="EMBL/GenBank/DDBJ databases">
        <title>Complete genome sequence of Thermus thermophilus HB8.</title>
        <authorList>
            <person name="Masui R."/>
            <person name="Kurokawa K."/>
            <person name="Nakagawa N."/>
            <person name="Tokunaga F."/>
            <person name="Koyama Y."/>
            <person name="Shibata T."/>
            <person name="Oshima T."/>
            <person name="Yokoyama S."/>
            <person name="Yasunaga T."/>
            <person name="Kuramitsu S."/>
        </authorList>
    </citation>
    <scope>NUCLEOTIDE SEQUENCE [LARGE SCALE GENOMIC DNA]</scope>
    <source>
        <strain>ATCC 27634 / DSM 579 / HB8</strain>
    </source>
</reference>
<evidence type="ECO:0000255" key="1">
    <source>
        <dbReference type="HAMAP-Rule" id="MF_01864"/>
    </source>
</evidence>
<evidence type="ECO:0000255" key="2">
    <source>
        <dbReference type="PROSITE-ProRule" id="PRU01266"/>
    </source>
</evidence>
<accession>Q5SME9</accession>
<gene>
    <name evidence="1" type="primary">miaB</name>
    <name type="ordered locus">TTHA1308</name>
</gene>
<name>MIAB_THET8</name>
<comment type="function">
    <text evidence="1">Catalyzes the methylthiolation of N6-(dimethylallyl)adenosine (i(6)A), leading to the formation of 2-methylthio-N6-(dimethylallyl)adenosine (ms(2)i(6)A) at position 37 in tRNAs that read codons beginning with uridine.</text>
</comment>
<comment type="catalytic activity">
    <reaction evidence="1">
        <text>N(6)-dimethylallyladenosine(37) in tRNA + (sulfur carrier)-SH + AH2 + 2 S-adenosyl-L-methionine = 2-methylsulfanyl-N(6)-dimethylallyladenosine(37) in tRNA + (sulfur carrier)-H + 5'-deoxyadenosine + L-methionine + A + S-adenosyl-L-homocysteine + 2 H(+)</text>
        <dbReference type="Rhea" id="RHEA:37067"/>
        <dbReference type="Rhea" id="RHEA-COMP:10375"/>
        <dbReference type="Rhea" id="RHEA-COMP:10376"/>
        <dbReference type="Rhea" id="RHEA-COMP:14737"/>
        <dbReference type="Rhea" id="RHEA-COMP:14739"/>
        <dbReference type="ChEBI" id="CHEBI:13193"/>
        <dbReference type="ChEBI" id="CHEBI:15378"/>
        <dbReference type="ChEBI" id="CHEBI:17319"/>
        <dbReference type="ChEBI" id="CHEBI:17499"/>
        <dbReference type="ChEBI" id="CHEBI:29917"/>
        <dbReference type="ChEBI" id="CHEBI:57844"/>
        <dbReference type="ChEBI" id="CHEBI:57856"/>
        <dbReference type="ChEBI" id="CHEBI:59789"/>
        <dbReference type="ChEBI" id="CHEBI:64428"/>
        <dbReference type="ChEBI" id="CHEBI:74415"/>
        <dbReference type="ChEBI" id="CHEBI:74417"/>
        <dbReference type="EC" id="2.8.4.3"/>
    </reaction>
</comment>
<comment type="cofactor">
    <cofactor evidence="1">
        <name>[4Fe-4S] cluster</name>
        <dbReference type="ChEBI" id="CHEBI:49883"/>
    </cofactor>
    <text evidence="1">Binds 2 [4Fe-4S] clusters. One cluster is coordinated with 3 cysteines and an exchangeable S-adenosyl-L-methionine.</text>
</comment>
<comment type="subunit">
    <text evidence="1">Monomer.</text>
</comment>
<comment type="subcellular location">
    <subcellularLocation>
        <location evidence="1">Cytoplasm</location>
    </subcellularLocation>
</comment>
<comment type="similarity">
    <text evidence="1">Belongs to the methylthiotransferase family. MiaB subfamily.</text>
</comment>
<proteinExistence type="inferred from homology"/>
<protein>
    <recommendedName>
        <fullName evidence="1">tRNA-2-methylthio-N(6)-dimethylallyladenosine synthase</fullName>
        <ecNumber evidence="1">2.8.4.3</ecNumber>
    </recommendedName>
    <alternativeName>
        <fullName evidence="1">(Dimethylallyl)adenosine tRNA methylthiotransferase MiaB</fullName>
    </alternativeName>
    <alternativeName>
        <fullName evidence="1">tRNA-i(6)A37 methylthiotransferase</fullName>
    </alternativeName>
</protein>
<sequence>MPPCYPFLLSWEGWARDPPGRPGGAMRAHIITYGCQMNEYDSHLVASELVSLGWELVDSVEEADFVLVNTCAVRGKPVEKVRSLLGQLRKEKERRGLLIGMMGCLAQLDEGQQMAKKFGVDVLLGPGALTSLPEALKANERFWDLTFREDVLDYIPPPPKGALSAHVTIIRGCNHHCTYCIVPTTRGPEVSRHPDLILKEIELLKQAGVVEVTLLGQNVNSYGKDQPGFPSFAELLRMVGGMGIPRVRFLTSHPVNFTDDIIEAIAETPAICRYIHLPVQSGSDRVLRRMAREYRRAHYLERIRKIREALPDAVLSTDIIVGFPGETEEDFQETLSLYDEVGYDQAYMFIYSPRPGTPAYKHFQDLPREVKVERLMRLIEKQKEWSYRRNLEWVGKTVEVLVRGEAKEEGFVQGHDRGNHPVLVPASQAPVPGLYQVEIKQATPHLLFGEVVGAEAPAPIPLPVA</sequence>
<feature type="chain" id="PRO_0000374618" description="tRNA-2-methylthio-N(6)-dimethylallyladenosine synthase">
    <location>
        <begin position="1"/>
        <end position="465"/>
    </location>
</feature>
<feature type="domain" description="MTTase N-terminal" evidence="1">
    <location>
        <begin position="26"/>
        <end position="141"/>
    </location>
</feature>
<feature type="domain" description="Radical SAM core" evidence="2">
    <location>
        <begin position="159"/>
        <end position="388"/>
    </location>
</feature>
<feature type="domain" description="TRAM" evidence="1">
    <location>
        <begin position="391"/>
        <end position="453"/>
    </location>
</feature>
<feature type="binding site" evidence="1">
    <location>
        <position position="35"/>
    </location>
    <ligand>
        <name>[4Fe-4S] cluster</name>
        <dbReference type="ChEBI" id="CHEBI:49883"/>
        <label>1</label>
    </ligand>
</feature>
<feature type="binding site" evidence="1">
    <location>
        <position position="71"/>
    </location>
    <ligand>
        <name>[4Fe-4S] cluster</name>
        <dbReference type="ChEBI" id="CHEBI:49883"/>
        <label>1</label>
    </ligand>
</feature>
<feature type="binding site" evidence="1">
    <location>
        <position position="104"/>
    </location>
    <ligand>
        <name>[4Fe-4S] cluster</name>
        <dbReference type="ChEBI" id="CHEBI:49883"/>
        <label>1</label>
    </ligand>
</feature>
<feature type="binding site" evidence="1">
    <location>
        <position position="173"/>
    </location>
    <ligand>
        <name>[4Fe-4S] cluster</name>
        <dbReference type="ChEBI" id="CHEBI:49883"/>
        <label>2</label>
        <note>4Fe-4S-S-AdoMet</note>
    </ligand>
</feature>
<feature type="binding site" evidence="1">
    <location>
        <position position="177"/>
    </location>
    <ligand>
        <name>[4Fe-4S] cluster</name>
        <dbReference type="ChEBI" id="CHEBI:49883"/>
        <label>2</label>
        <note>4Fe-4S-S-AdoMet</note>
    </ligand>
</feature>
<feature type="binding site" evidence="1">
    <location>
        <position position="180"/>
    </location>
    <ligand>
        <name>[4Fe-4S] cluster</name>
        <dbReference type="ChEBI" id="CHEBI:49883"/>
        <label>2</label>
        <note>4Fe-4S-S-AdoMet</note>
    </ligand>
</feature>
<keyword id="KW-0004">4Fe-4S</keyword>
<keyword id="KW-0963">Cytoplasm</keyword>
<keyword id="KW-0408">Iron</keyword>
<keyword id="KW-0411">Iron-sulfur</keyword>
<keyword id="KW-0479">Metal-binding</keyword>
<keyword id="KW-1185">Reference proteome</keyword>
<keyword id="KW-0949">S-adenosyl-L-methionine</keyword>
<keyword id="KW-0808">Transferase</keyword>
<keyword id="KW-0819">tRNA processing</keyword>